<dbReference type="EMBL" id="GE749643">
    <property type="status" value="NOT_ANNOTATED_CDS"/>
    <property type="molecule type" value="mRNA"/>
</dbReference>
<dbReference type="SMR" id="P86857"/>
<dbReference type="GO" id="GO:0005576">
    <property type="term" value="C:extracellular region"/>
    <property type="evidence" value="ECO:0007669"/>
    <property type="project" value="UniProtKB-SubCell"/>
</dbReference>
<reference evidence="4" key="1">
    <citation type="submission" date="2008-12" db="EMBL/GenBank/DDBJ databases">
        <title>Expressed sequence tags from Mytilus californianus.</title>
        <authorList>
            <person name="Gracey A."/>
            <person name="Grimwood J."/>
            <person name="Schmutz J."/>
            <person name="Myers R.M."/>
        </authorList>
    </citation>
    <scope>NUCLEOTIDE SEQUENCE [MRNA]</scope>
</reference>
<reference evidence="4" key="2">
    <citation type="journal article" date="2011" name="J. Mol. Evol.">
        <title>Molecular evolution of mollusc shell proteins: insights from proteomic analysis of the edible mussel mytilus.</title>
        <authorList>
            <person name="Marie B."/>
            <person name="Le Roy N."/>
            <person name="Zanella-Cleon I."/>
            <person name="Becchi M."/>
            <person name="Marin F."/>
        </authorList>
    </citation>
    <scope>PROTEIN SEQUENCE OF 12-19; 71-94 AND 174-184</scope>
    <scope>SUBCELLULAR LOCATION</scope>
    <scope>TISSUE SPECIFICITY</scope>
    <source>
        <tissue evidence="2">Shell</tissue>
    </source>
</reference>
<protein>
    <recommendedName>
        <fullName>Alanine and glycine-rich protein</fullName>
    </recommendedName>
    <alternativeName>
        <fullName evidence="3">MSI60-like protein</fullName>
    </alternativeName>
</protein>
<proteinExistence type="evidence at protein level"/>
<sequence length="189" mass="16035">SAAASAARRARLLNLLFARSSAAAAASAAASAGAGSGSGGFGLGSRFLGGGRGGSRAAASAVASAGASARGGGGGGGGSSSAAAAAAAAAAAARNANLRGWLVASGVGAGAGAGAGAGAGAGAGAGAGAGGGSGGGGGGGSGSGGSGGSGGSGGSGGNDGNDGNDGSSSRGVKLYAYDYYKDDKKGSND</sequence>
<evidence type="ECO:0000256" key="1">
    <source>
        <dbReference type="SAM" id="MobiDB-lite"/>
    </source>
</evidence>
<evidence type="ECO:0000269" key="2">
    <source>
    </source>
</evidence>
<evidence type="ECO:0000303" key="3">
    <source>
    </source>
</evidence>
<evidence type="ECO:0000305" key="4"/>
<comment type="subcellular location">
    <subcellularLocation>
        <location evidence="2">Secreted</location>
    </subcellularLocation>
</comment>
<comment type="tissue specificity">
    <text evidence="2">Component of the organic matrix of calcified shell layers like nacre and prisms.</text>
</comment>
<keyword id="KW-0903">Direct protein sequencing</keyword>
<keyword id="KW-0964">Secreted</keyword>
<organism>
    <name type="scientific">Mytilus californianus</name>
    <name type="common">California mussel</name>
    <dbReference type="NCBI Taxonomy" id="6549"/>
    <lineage>
        <taxon>Eukaryota</taxon>
        <taxon>Metazoa</taxon>
        <taxon>Spiralia</taxon>
        <taxon>Lophotrochozoa</taxon>
        <taxon>Mollusca</taxon>
        <taxon>Bivalvia</taxon>
        <taxon>Autobranchia</taxon>
        <taxon>Pteriomorphia</taxon>
        <taxon>Mytilida</taxon>
        <taxon>Mytiloidea</taxon>
        <taxon>Mytilidae</taxon>
        <taxon>Mytilinae</taxon>
        <taxon>Mytilus</taxon>
    </lineage>
</organism>
<accession>P86857</accession>
<feature type="chain" id="PRO_0000404082" description="Alanine and glycine-rich protein">
    <location>
        <begin position="1"/>
        <end position="189"/>
    </location>
</feature>
<feature type="region of interest" description="Disordered" evidence="1">
    <location>
        <begin position="127"/>
        <end position="170"/>
    </location>
</feature>
<feature type="compositionally biased region" description="Gly residues" evidence="1">
    <location>
        <begin position="127"/>
        <end position="160"/>
    </location>
</feature>
<feature type="non-terminal residue" evidence="3">
    <location>
        <position position="1"/>
    </location>
</feature>
<name>AGP_MYTCA</name>